<gene>
    <name evidence="1" type="primary">mraY</name>
    <name type="ordered locus">TERTU_3052</name>
</gene>
<accession>C5BP37</accession>
<sequence>MLVWLANFLESYVSGFGVFQYLTLRAILGVLTALGLSMVLGPWVIRKLNELQIGQAIRDDGPQSHLSKSGTPTMGGTLILFSIVTATLLWADLSNRYVLAVLFVTITFGLIGWVDDYRKVVEKNSKGLPAKWKYFWQSACGFIVAIALFVTAQTPAETTLYIPFFKNVAWQMGVLYVFVTYLMIVGFSNAVNLTDGLDGLAIMPTVMVGSALGVIAYLVGNANFSEYLHIAFVPGSGELVVYCAALAGAGLGFLWFNTYPAQVFMGDVGALALGAALGVIAVIVRHEIVFFIMSGIFVMETVSVILQVGSYKLTGRRIFRMAPLHHHFELKGWPEPRVIVRFWIITVILVLFGLATLKIR</sequence>
<keyword id="KW-0131">Cell cycle</keyword>
<keyword id="KW-0132">Cell division</keyword>
<keyword id="KW-0997">Cell inner membrane</keyword>
<keyword id="KW-1003">Cell membrane</keyword>
<keyword id="KW-0133">Cell shape</keyword>
<keyword id="KW-0961">Cell wall biogenesis/degradation</keyword>
<keyword id="KW-0460">Magnesium</keyword>
<keyword id="KW-0472">Membrane</keyword>
<keyword id="KW-0479">Metal-binding</keyword>
<keyword id="KW-0573">Peptidoglycan synthesis</keyword>
<keyword id="KW-1185">Reference proteome</keyword>
<keyword id="KW-0808">Transferase</keyword>
<keyword id="KW-0812">Transmembrane</keyword>
<keyword id="KW-1133">Transmembrane helix</keyword>
<dbReference type="EC" id="2.7.8.13" evidence="1"/>
<dbReference type="EMBL" id="CP001614">
    <property type="protein sequence ID" value="ACR11430.1"/>
    <property type="molecule type" value="Genomic_DNA"/>
</dbReference>
<dbReference type="RefSeq" id="WP_015817542.1">
    <property type="nucleotide sequence ID" value="NC_012997.1"/>
</dbReference>
<dbReference type="SMR" id="C5BP37"/>
<dbReference type="STRING" id="377629.TERTU_3052"/>
<dbReference type="KEGG" id="ttu:TERTU_3052"/>
<dbReference type="eggNOG" id="COG0472">
    <property type="taxonomic scope" value="Bacteria"/>
</dbReference>
<dbReference type="HOGENOM" id="CLU_023982_0_0_6"/>
<dbReference type="OrthoDB" id="9805475at2"/>
<dbReference type="UniPathway" id="UPA00219"/>
<dbReference type="Proteomes" id="UP000009080">
    <property type="component" value="Chromosome"/>
</dbReference>
<dbReference type="GO" id="GO:0005886">
    <property type="term" value="C:plasma membrane"/>
    <property type="evidence" value="ECO:0007669"/>
    <property type="project" value="UniProtKB-SubCell"/>
</dbReference>
<dbReference type="GO" id="GO:0046872">
    <property type="term" value="F:metal ion binding"/>
    <property type="evidence" value="ECO:0007669"/>
    <property type="project" value="UniProtKB-KW"/>
</dbReference>
<dbReference type="GO" id="GO:0008963">
    <property type="term" value="F:phospho-N-acetylmuramoyl-pentapeptide-transferase activity"/>
    <property type="evidence" value="ECO:0007669"/>
    <property type="project" value="UniProtKB-UniRule"/>
</dbReference>
<dbReference type="GO" id="GO:0051992">
    <property type="term" value="F:UDP-N-acetylmuramoyl-L-alanyl-D-glutamyl-meso-2,6-diaminopimelyl-D-alanyl-D-alanine:undecaprenyl-phosphate transferase activity"/>
    <property type="evidence" value="ECO:0007669"/>
    <property type="project" value="RHEA"/>
</dbReference>
<dbReference type="GO" id="GO:0051301">
    <property type="term" value="P:cell division"/>
    <property type="evidence" value="ECO:0007669"/>
    <property type="project" value="UniProtKB-KW"/>
</dbReference>
<dbReference type="GO" id="GO:0071555">
    <property type="term" value="P:cell wall organization"/>
    <property type="evidence" value="ECO:0007669"/>
    <property type="project" value="UniProtKB-KW"/>
</dbReference>
<dbReference type="GO" id="GO:0009252">
    <property type="term" value="P:peptidoglycan biosynthetic process"/>
    <property type="evidence" value="ECO:0007669"/>
    <property type="project" value="UniProtKB-UniRule"/>
</dbReference>
<dbReference type="GO" id="GO:0008360">
    <property type="term" value="P:regulation of cell shape"/>
    <property type="evidence" value="ECO:0007669"/>
    <property type="project" value="UniProtKB-KW"/>
</dbReference>
<dbReference type="CDD" id="cd06852">
    <property type="entry name" value="GT_MraY"/>
    <property type="match status" value="1"/>
</dbReference>
<dbReference type="HAMAP" id="MF_00038">
    <property type="entry name" value="MraY"/>
    <property type="match status" value="1"/>
</dbReference>
<dbReference type="InterPro" id="IPR000715">
    <property type="entry name" value="Glycosyl_transferase_4"/>
</dbReference>
<dbReference type="InterPro" id="IPR003524">
    <property type="entry name" value="PNAcMuramoyl-5peptid_Trfase"/>
</dbReference>
<dbReference type="InterPro" id="IPR018480">
    <property type="entry name" value="PNAcMuramoyl-5peptid_Trfase_CS"/>
</dbReference>
<dbReference type="NCBIfam" id="TIGR00445">
    <property type="entry name" value="mraY"/>
    <property type="match status" value="1"/>
</dbReference>
<dbReference type="PANTHER" id="PTHR22926">
    <property type="entry name" value="PHOSPHO-N-ACETYLMURAMOYL-PENTAPEPTIDE-TRANSFERASE"/>
    <property type="match status" value="1"/>
</dbReference>
<dbReference type="PANTHER" id="PTHR22926:SF5">
    <property type="entry name" value="PHOSPHO-N-ACETYLMURAMOYL-PENTAPEPTIDE-TRANSFERASE HOMOLOG"/>
    <property type="match status" value="1"/>
</dbReference>
<dbReference type="Pfam" id="PF00953">
    <property type="entry name" value="Glycos_transf_4"/>
    <property type="match status" value="1"/>
</dbReference>
<dbReference type="Pfam" id="PF10555">
    <property type="entry name" value="MraY_sig1"/>
    <property type="match status" value="1"/>
</dbReference>
<dbReference type="PROSITE" id="PS01348">
    <property type="entry name" value="MRAY_2"/>
    <property type="match status" value="1"/>
</dbReference>
<evidence type="ECO:0000255" key="1">
    <source>
        <dbReference type="HAMAP-Rule" id="MF_00038"/>
    </source>
</evidence>
<protein>
    <recommendedName>
        <fullName evidence="1">Phospho-N-acetylmuramoyl-pentapeptide-transferase</fullName>
        <ecNumber evidence="1">2.7.8.13</ecNumber>
    </recommendedName>
    <alternativeName>
        <fullName evidence="1">UDP-MurNAc-pentapeptide phosphotransferase</fullName>
    </alternativeName>
</protein>
<feature type="chain" id="PRO_1000202079" description="Phospho-N-acetylmuramoyl-pentapeptide-transferase">
    <location>
        <begin position="1"/>
        <end position="360"/>
    </location>
</feature>
<feature type="transmembrane region" description="Helical" evidence="1">
    <location>
        <begin position="25"/>
        <end position="45"/>
    </location>
</feature>
<feature type="transmembrane region" description="Helical" evidence="1">
    <location>
        <begin position="73"/>
        <end position="93"/>
    </location>
</feature>
<feature type="transmembrane region" description="Helical" evidence="1">
    <location>
        <begin position="97"/>
        <end position="117"/>
    </location>
</feature>
<feature type="transmembrane region" description="Helical" evidence="1">
    <location>
        <begin position="132"/>
        <end position="152"/>
    </location>
</feature>
<feature type="transmembrane region" description="Helical" evidence="1">
    <location>
        <begin position="168"/>
        <end position="188"/>
    </location>
</feature>
<feature type="transmembrane region" description="Helical" evidence="1">
    <location>
        <begin position="199"/>
        <end position="219"/>
    </location>
</feature>
<feature type="transmembrane region" description="Helical" evidence="1">
    <location>
        <begin position="236"/>
        <end position="256"/>
    </location>
</feature>
<feature type="transmembrane region" description="Helical" evidence="1">
    <location>
        <begin position="263"/>
        <end position="283"/>
    </location>
</feature>
<feature type="transmembrane region" description="Helical" evidence="1">
    <location>
        <begin position="288"/>
        <end position="308"/>
    </location>
</feature>
<feature type="transmembrane region" description="Helical" evidence="1">
    <location>
        <begin position="339"/>
        <end position="359"/>
    </location>
</feature>
<comment type="function">
    <text evidence="1">Catalyzes the initial step of the lipid cycle reactions in the biosynthesis of the cell wall peptidoglycan: transfers peptidoglycan precursor phospho-MurNAc-pentapeptide from UDP-MurNAc-pentapeptide onto the lipid carrier undecaprenyl phosphate, yielding undecaprenyl-pyrophosphoryl-MurNAc-pentapeptide, known as lipid I.</text>
</comment>
<comment type="catalytic activity">
    <reaction evidence="1">
        <text>UDP-N-acetyl-alpha-D-muramoyl-L-alanyl-gamma-D-glutamyl-meso-2,6-diaminopimeloyl-D-alanyl-D-alanine + di-trans,octa-cis-undecaprenyl phosphate = di-trans,octa-cis-undecaprenyl diphospho-N-acetyl-alpha-D-muramoyl-L-alanyl-D-glutamyl-meso-2,6-diaminopimeloyl-D-alanyl-D-alanine + UMP</text>
        <dbReference type="Rhea" id="RHEA:28386"/>
        <dbReference type="ChEBI" id="CHEBI:57865"/>
        <dbReference type="ChEBI" id="CHEBI:60392"/>
        <dbReference type="ChEBI" id="CHEBI:61386"/>
        <dbReference type="ChEBI" id="CHEBI:61387"/>
        <dbReference type="EC" id="2.7.8.13"/>
    </reaction>
</comment>
<comment type="cofactor">
    <cofactor evidence="1">
        <name>Mg(2+)</name>
        <dbReference type="ChEBI" id="CHEBI:18420"/>
    </cofactor>
</comment>
<comment type="pathway">
    <text evidence="1">Cell wall biogenesis; peptidoglycan biosynthesis.</text>
</comment>
<comment type="subcellular location">
    <subcellularLocation>
        <location evidence="1">Cell inner membrane</location>
        <topology evidence="1">Multi-pass membrane protein</topology>
    </subcellularLocation>
</comment>
<comment type="similarity">
    <text evidence="1">Belongs to the glycosyltransferase 4 family. MraY subfamily.</text>
</comment>
<reference key="1">
    <citation type="journal article" date="2009" name="PLoS ONE">
        <title>The complete genome of Teredinibacter turnerae T7901: an intracellular endosymbiont of marine wood-boring bivalves (shipworms).</title>
        <authorList>
            <person name="Yang J.C."/>
            <person name="Madupu R."/>
            <person name="Durkin A.S."/>
            <person name="Ekborg N.A."/>
            <person name="Pedamallu C.S."/>
            <person name="Hostetler J.B."/>
            <person name="Radune D."/>
            <person name="Toms B.S."/>
            <person name="Henrissat B."/>
            <person name="Coutinho P.M."/>
            <person name="Schwarz S."/>
            <person name="Field L."/>
            <person name="Trindade-Silva A.E."/>
            <person name="Soares C.A.G."/>
            <person name="Elshahawi S."/>
            <person name="Hanora A."/>
            <person name="Schmidt E.W."/>
            <person name="Haygood M.G."/>
            <person name="Posfai J."/>
            <person name="Benner J."/>
            <person name="Madinger C."/>
            <person name="Nove J."/>
            <person name="Anton B."/>
            <person name="Chaudhary K."/>
            <person name="Foster J."/>
            <person name="Holman A."/>
            <person name="Kumar S."/>
            <person name="Lessard P.A."/>
            <person name="Luyten Y.A."/>
            <person name="Slatko B."/>
            <person name="Wood N."/>
            <person name="Wu B."/>
            <person name="Teplitski M."/>
            <person name="Mougous J.D."/>
            <person name="Ward N."/>
            <person name="Eisen J.A."/>
            <person name="Badger J.H."/>
            <person name="Distel D.L."/>
        </authorList>
    </citation>
    <scope>NUCLEOTIDE SEQUENCE [LARGE SCALE GENOMIC DNA]</scope>
    <source>
        <strain>ATCC 39867 / T7901</strain>
    </source>
</reference>
<name>MRAY_TERTT</name>
<proteinExistence type="inferred from homology"/>
<organism>
    <name type="scientific">Teredinibacter turnerae (strain ATCC 39867 / T7901)</name>
    <dbReference type="NCBI Taxonomy" id="377629"/>
    <lineage>
        <taxon>Bacteria</taxon>
        <taxon>Pseudomonadati</taxon>
        <taxon>Pseudomonadota</taxon>
        <taxon>Gammaproteobacteria</taxon>
        <taxon>Cellvibrionales</taxon>
        <taxon>Cellvibrionaceae</taxon>
        <taxon>Teredinibacter</taxon>
    </lineage>
</organism>